<accession>A7FF20</accession>
<organism>
    <name type="scientific">Yersinia pseudotuberculosis serotype O:1b (strain IP 31758)</name>
    <dbReference type="NCBI Taxonomy" id="349747"/>
    <lineage>
        <taxon>Bacteria</taxon>
        <taxon>Pseudomonadati</taxon>
        <taxon>Pseudomonadota</taxon>
        <taxon>Gammaproteobacteria</taxon>
        <taxon>Enterobacterales</taxon>
        <taxon>Yersiniaceae</taxon>
        <taxon>Yersinia</taxon>
    </lineage>
</organism>
<keyword id="KW-0450">Lipoyl</keyword>
<dbReference type="EMBL" id="CP000720">
    <property type="protein sequence ID" value="ABS48332.1"/>
    <property type="molecule type" value="Genomic_DNA"/>
</dbReference>
<dbReference type="RefSeq" id="WP_002209948.1">
    <property type="nucleotide sequence ID" value="NC_009708.1"/>
</dbReference>
<dbReference type="SMR" id="A7FF20"/>
<dbReference type="GeneID" id="57973734"/>
<dbReference type="KEGG" id="ypi:YpsIP31758_0864"/>
<dbReference type="HOGENOM" id="CLU_097408_2_0_6"/>
<dbReference type="Proteomes" id="UP000002412">
    <property type="component" value="Chromosome"/>
</dbReference>
<dbReference type="GO" id="GO:0005829">
    <property type="term" value="C:cytosol"/>
    <property type="evidence" value="ECO:0007669"/>
    <property type="project" value="TreeGrafter"/>
</dbReference>
<dbReference type="GO" id="GO:0005960">
    <property type="term" value="C:glycine cleavage complex"/>
    <property type="evidence" value="ECO:0007669"/>
    <property type="project" value="InterPro"/>
</dbReference>
<dbReference type="GO" id="GO:0019464">
    <property type="term" value="P:glycine decarboxylation via glycine cleavage system"/>
    <property type="evidence" value="ECO:0007669"/>
    <property type="project" value="UniProtKB-UniRule"/>
</dbReference>
<dbReference type="CDD" id="cd06848">
    <property type="entry name" value="GCS_H"/>
    <property type="match status" value="1"/>
</dbReference>
<dbReference type="FunFam" id="2.40.50.100:FF:000011">
    <property type="entry name" value="Glycine cleavage system H protein"/>
    <property type="match status" value="1"/>
</dbReference>
<dbReference type="Gene3D" id="2.40.50.100">
    <property type="match status" value="1"/>
</dbReference>
<dbReference type="HAMAP" id="MF_00272">
    <property type="entry name" value="GcvH"/>
    <property type="match status" value="1"/>
</dbReference>
<dbReference type="InterPro" id="IPR003016">
    <property type="entry name" value="2-oxoA_DH_lipoyl-BS"/>
</dbReference>
<dbReference type="InterPro" id="IPR000089">
    <property type="entry name" value="Biotin_lipoyl"/>
</dbReference>
<dbReference type="InterPro" id="IPR002930">
    <property type="entry name" value="GCV_H"/>
</dbReference>
<dbReference type="InterPro" id="IPR033753">
    <property type="entry name" value="GCV_H/Fam206"/>
</dbReference>
<dbReference type="InterPro" id="IPR017453">
    <property type="entry name" value="GCV_H_sub"/>
</dbReference>
<dbReference type="InterPro" id="IPR011053">
    <property type="entry name" value="Single_hybrid_motif"/>
</dbReference>
<dbReference type="NCBIfam" id="TIGR00527">
    <property type="entry name" value="gcvH"/>
    <property type="match status" value="1"/>
</dbReference>
<dbReference type="NCBIfam" id="NF002270">
    <property type="entry name" value="PRK01202.1"/>
    <property type="match status" value="1"/>
</dbReference>
<dbReference type="PANTHER" id="PTHR11715">
    <property type="entry name" value="GLYCINE CLEAVAGE SYSTEM H PROTEIN"/>
    <property type="match status" value="1"/>
</dbReference>
<dbReference type="PANTHER" id="PTHR11715:SF3">
    <property type="entry name" value="GLYCINE CLEAVAGE SYSTEM H PROTEIN-RELATED"/>
    <property type="match status" value="1"/>
</dbReference>
<dbReference type="Pfam" id="PF01597">
    <property type="entry name" value="GCV_H"/>
    <property type="match status" value="1"/>
</dbReference>
<dbReference type="SUPFAM" id="SSF51230">
    <property type="entry name" value="Single hybrid motif"/>
    <property type="match status" value="1"/>
</dbReference>
<dbReference type="PROSITE" id="PS50968">
    <property type="entry name" value="BIOTINYL_LIPOYL"/>
    <property type="match status" value="1"/>
</dbReference>
<dbReference type="PROSITE" id="PS00189">
    <property type="entry name" value="LIPOYL"/>
    <property type="match status" value="1"/>
</dbReference>
<reference key="1">
    <citation type="journal article" date="2007" name="PLoS Genet.">
        <title>The complete genome sequence of Yersinia pseudotuberculosis IP31758, the causative agent of Far East scarlet-like fever.</title>
        <authorList>
            <person name="Eppinger M."/>
            <person name="Rosovitz M.J."/>
            <person name="Fricke W.F."/>
            <person name="Rasko D.A."/>
            <person name="Kokorina G."/>
            <person name="Fayolle C."/>
            <person name="Lindler L.E."/>
            <person name="Carniel E."/>
            <person name="Ravel J."/>
        </authorList>
    </citation>
    <scope>NUCLEOTIDE SEQUENCE [LARGE SCALE GENOMIC DNA]</scope>
    <source>
        <strain>IP 31758</strain>
    </source>
</reference>
<proteinExistence type="inferred from homology"/>
<gene>
    <name evidence="1" type="primary">gcvH</name>
    <name type="ordered locus">YpsIP31758_0864</name>
</gene>
<protein>
    <recommendedName>
        <fullName evidence="1">Glycine cleavage system H protein</fullName>
    </recommendedName>
</protein>
<evidence type="ECO:0000255" key="1">
    <source>
        <dbReference type="HAMAP-Rule" id="MF_00272"/>
    </source>
</evidence>
<evidence type="ECO:0000255" key="2">
    <source>
        <dbReference type="PROSITE-ProRule" id="PRU01066"/>
    </source>
</evidence>
<feature type="chain" id="PRO_1000059191" description="Glycine cleavage system H protein">
    <location>
        <begin position="1"/>
        <end position="128"/>
    </location>
</feature>
<feature type="domain" description="Lipoyl-binding" evidence="2">
    <location>
        <begin position="24"/>
        <end position="106"/>
    </location>
</feature>
<feature type="modified residue" description="N6-lipoyllysine" evidence="1">
    <location>
        <position position="65"/>
    </location>
</feature>
<name>GCSH_YERP3</name>
<sequence length="128" mass="13581">MSNVPTELKYALSHEWVRADGDGVYSVGITEHAQELLGDMVFVDLPEVGSDVSAGSDCAVAESVKAASDIYAPISGEIVAVNTELENSPELVNSAPYTDGWLFSIKAADESELDNLLDADAYLAAIEE</sequence>
<comment type="function">
    <text evidence="1">The glycine cleavage system catalyzes the degradation of glycine. The H protein shuttles the methylamine group of glycine from the P protein to the T protein.</text>
</comment>
<comment type="cofactor">
    <cofactor evidence="1">
        <name>(R)-lipoate</name>
        <dbReference type="ChEBI" id="CHEBI:83088"/>
    </cofactor>
    <text evidence="1">Binds 1 lipoyl cofactor covalently.</text>
</comment>
<comment type="subunit">
    <text evidence="1">The glycine cleavage system is composed of four proteins: P, T, L and H.</text>
</comment>
<comment type="similarity">
    <text evidence="1">Belongs to the GcvH family.</text>
</comment>